<sequence length="376" mass="41044">MAKQDYYEILGVSKTAEEREIKKAYKRLAMKYHPDRNQGDKEAEAKFKEIKEAYEVLTDSQKRAAYDQYGHAAFEQGGMGGGGFGGGADFSDIFGDVFGDIFGGGRGRQRAARGADLRYNMELTLEEAVRGVTKEIRIPTLEECDVCHGSGAKPGTQPQTCPTCHGSGQVQMRQGFFAVQQTCPHCQGRGTLIKDPCNKCHGHGRVERSKTLSVKIPAGVDTGDRIRLAGEGEAGEHGAPAGDLYVQVQVKQHPIFEREGNNLYCEVPINFAMAALGGEIEVPTLDGRVKLKVPGETQTGKLFRMRGKGVKSVRGGAQGDLLCRVVVETPVGLNEKQKQLLQELQESFGGPTGEHNSPRSKSFFDGVKKFFDDLTR</sequence>
<name>DNAJ_ECO8A</name>
<accession>B7M0B1</accession>
<comment type="function">
    <text evidence="1">Participates actively in the response to hyperosmotic and heat shock by preventing the aggregation of stress-denatured proteins and by disaggregating proteins, also in an autonomous, DnaK-independent fashion. Unfolded proteins bind initially to DnaJ; upon interaction with the DnaJ-bound protein, DnaK hydrolyzes its bound ATP, resulting in the formation of a stable complex. GrpE releases ADP from DnaK; ATP binding to DnaK triggers the release of the substrate protein, thus completing the reaction cycle. Several rounds of ATP-dependent interactions between DnaJ, DnaK and GrpE are required for fully efficient folding. Also involved, together with DnaK and GrpE, in the DNA replication of plasmids through activation of initiation proteins.</text>
</comment>
<comment type="cofactor">
    <cofactor evidence="1">
        <name>Zn(2+)</name>
        <dbReference type="ChEBI" id="CHEBI:29105"/>
    </cofactor>
    <text evidence="1">Binds 2 Zn(2+) ions per monomer.</text>
</comment>
<comment type="subunit">
    <text evidence="1">Homodimer.</text>
</comment>
<comment type="subcellular location">
    <subcellularLocation>
        <location evidence="1">Cytoplasm</location>
    </subcellularLocation>
</comment>
<comment type="domain">
    <text evidence="1">The J domain is necessary and sufficient to stimulate DnaK ATPase activity. Zinc center 1 plays an important role in the autonomous, DnaK-independent chaperone activity of DnaJ. Zinc center 2 is essential for interaction with DnaK and for DnaJ activity.</text>
</comment>
<comment type="similarity">
    <text evidence="1">Belongs to the DnaJ family.</text>
</comment>
<protein>
    <recommendedName>
        <fullName evidence="1">Chaperone protein DnaJ</fullName>
    </recommendedName>
</protein>
<proteinExistence type="inferred from homology"/>
<evidence type="ECO:0000255" key="1">
    <source>
        <dbReference type="HAMAP-Rule" id="MF_01152"/>
    </source>
</evidence>
<dbReference type="EMBL" id="CU928160">
    <property type="protein sequence ID" value="CAQ96906.1"/>
    <property type="molecule type" value="Genomic_DNA"/>
</dbReference>
<dbReference type="RefSeq" id="WP_001118464.1">
    <property type="nucleotide sequence ID" value="NC_011741.1"/>
</dbReference>
<dbReference type="SMR" id="B7M0B1"/>
<dbReference type="GeneID" id="93777428"/>
<dbReference type="KEGG" id="ecr:ECIAI1_0015"/>
<dbReference type="HOGENOM" id="CLU_017633_0_7_6"/>
<dbReference type="GO" id="GO:0005737">
    <property type="term" value="C:cytoplasm"/>
    <property type="evidence" value="ECO:0007669"/>
    <property type="project" value="UniProtKB-SubCell"/>
</dbReference>
<dbReference type="GO" id="GO:0005524">
    <property type="term" value="F:ATP binding"/>
    <property type="evidence" value="ECO:0007669"/>
    <property type="project" value="InterPro"/>
</dbReference>
<dbReference type="GO" id="GO:0031072">
    <property type="term" value="F:heat shock protein binding"/>
    <property type="evidence" value="ECO:0007669"/>
    <property type="project" value="InterPro"/>
</dbReference>
<dbReference type="GO" id="GO:0051082">
    <property type="term" value="F:unfolded protein binding"/>
    <property type="evidence" value="ECO:0007669"/>
    <property type="project" value="UniProtKB-UniRule"/>
</dbReference>
<dbReference type="GO" id="GO:0008270">
    <property type="term" value="F:zinc ion binding"/>
    <property type="evidence" value="ECO:0007669"/>
    <property type="project" value="UniProtKB-UniRule"/>
</dbReference>
<dbReference type="GO" id="GO:0051085">
    <property type="term" value="P:chaperone cofactor-dependent protein refolding"/>
    <property type="evidence" value="ECO:0007669"/>
    <property type="project" value="TreeGrafter"/>
</dbReference>
<dbReference type="GO" id="GO:0006260">
    <property type="term" value="P:DNA replication"/>
    <property type="evidence" value="ECO:0007669"/>
    <property type="project" value="UniProtKB-KW"/>
</dbReference>
<dbReference type="GO" id="GO:0042026">
    <property type="term" value="P:protein refolding"/>
    <property type="evidence" value="ECO:0007669"/>
    <property type="project" value="TreeGrafter"/>
</dbReference>
<dbReference type="GO" id="GO:0009408">
    <property type="term" value="P:response to heat"/>
    <property type="evidence" value="ECO:0007669"/>
    <property type="project" value="InterPro"/>
</dbReference>
<dbReference type="CDD" id="cd06257">
    <property type="entry name" value="DnaJ"/>
    <property type="match status" value="1"/>
</dbReference>
<dbReference type="CDD" id="cd10747">
    <property type="entry name" value="DnaJ_C"/>
    <property type="match status" value="1"/>
</dbReference>
<dbReference type="CDD" id="cd10719">
    <property type="entry name" value="DnaJ_zf"/>
    <property type="match status" value="1"/>
</dbReference>
<dbReference type="FunFam" id="1.10.287.110:FF:000003">
    <property type="entry name" value="Molecular chaperone DnaJ"/>
    <property type="match status" value="1"/>
</dbReference>
<dbReference type="FunFam" id="2.10.230.10:FF:000002">
    <property type="entry name" value="Molecular chaperone DnaJ"/>
    <property type="match status" value="1"/>
</dbReference>
<dbReference type="FunFam" id="2.60.260.20:FF:000004">
    <property type="entry name" value="Molecular chaperone DnaJ"/>
    <property type="match status" value="1"/>
</dbReference>
<dbReference type="Gene3D" id="1.10.287.110">
    <property type="entry name" value="DnaJ domain"/>
    <property type="match status" value="1"/>
</dbReference>
<dbReference type="Gene3D" id="2.10.230.10">
    <property type="entry name" value="Heat shock protein DnaJ, cysteine-rich domain"/>
    <property type="match status" value="1"/>
</dbReference>
<dbReference type="Gene3D" id="2.60.260.20">
    <property type="entry name" value="Urease metallochaperone UreE, N-terminal domain"/>
    <property type="match status" value="2"/>
</dbReference>
<dbReference type="HAMAP" id="MF_01152">
    <property type="entry name" value="DnaJ"/>
    <property type="match status" value="1"/>
</dbReference>
<dbReference type="InterPro" id="IPR012724">
    <property type="entry name" value="DnaJ"/>
</dbReference>
<dbReference type="InterPro" id="IPR002939">
    <property type="entry name" value="DnaJ_C"/>
</dbReference>
<dbReference type="InterPro" id="IPR001623">
    <property type="entry name" value="DnaJ_domain"/>
</dbReference>
<dbReference type="InterPro" id="IPR018253">
    <property type="entry name" value="DnaJ_domain_CS"/>
</dbReference>
<dbReference type="InterPro" id="IPR008971">
    <property type="entry name" value="HSP40/DnaJ_pept-bd"/>
</dbReference>
<dbReference type="InterPro" id="IPR001305">
    <property type="entry name" value="HSP_DnaJ_Cys-rich_dom"/>
</dbReference>
<dbReference type="InterPro" id="IPR036410">
    <property type="entry name" value="HSP_DnaJ_Cys-rich_dom_sf"/>
</dbReference>
<dbReference type="InterPro" id="IPR036869">
    <property type="entry name" value="J_dom_sf"/>
</dbReference>
<dbReference type="NCBIfam" id="TIGR02349">
    <property type="entry name" value="DnaJ_bact"/>
    <property type="match status" value="1"/>
</dbReference>
<dbReference type="NCBIfam" id="NF008035">
    <property type="entry name" value="PRK10767.1"/>
    <property type="match status" value="1"/>
</dbReference>
<dbReference type="PANTHER" id="PTHR43096:SF48">
    <property type="entry name" value="CHAPERONE PROTEIN DNAJ"/>
    <property type="match status" value="1"/>
</dbReference>
<dbReference type="PANTHER" id="PTHR43096">
    <property type="entry name" value="DNAJ HOMOLOG 1, MITOCHONDRIAL-RELATED"/>
    <property type="match status" value="1"/>
</dbReference>
<dbReference type="Pfam" id="PF00226">
    <property type="entry name" value="DnaJ"/>
    <property type="match status" value="1"/>
</dbReference>
<dbReference type="Pfam" id="PF01556">
    <property type="entry name" value="DnaJ_C"/>
    <property type="match status" value="1"/>
</dbReference>
<dbReference type="Pfam" id="PF00684">
    <property type="entry name" value="DnaJ_CXXCXGXG"/>
    <property type="match status" value="1"/>
</dbReference>
<dbReference type="PRINTS" id="PR00625">
    <property type="entry name" value="JDOMAIN"/>
</dbReference>
<dbReference type="SMART" id="SM00271">
    <property type="entry name" value="DnaJ"/>
    <property type="match status" value="1"/>
</dbReference>
<dbReference type="SUPFAM" id="SSF46565">
    <property type="entry name" value="Chaperone J-domain"/>
    <property type="match status" value="1"/>
</dbReference>
<dbReference type="SUPFAM" id="SSF57938">
    <property type="entry name" value="DnaJ/Hsp40 cysteine-rich domain"/>
    <property type="match status" value="1"/>
</dbReference>
<dbReference type="SUPFAM" id="SSF49493">
    <property type="entry name" value="HSP40/DnaJ peptide-binding domain"/>
    <property type="match status" value="2"/>
</dbReference>
<dbReference type="PROSITE" id="PS00636">
    <property type="entry name" value="DNAJ_1"/>
    <property type="match status" value="1"/>
</dbReference>
<dbReference type="PROSITE" id="PS50076">
    <property type="entry name" value="DNAJ_2"/>
    <property type="match status" value="1"/>
</dbReference>
<dbReference type="PROSITE" id="PS51188">
    <property type="entry name" value="ZF_CR"/>
    <property type="match status" value="1"/>
</dbReference>
<organism>
    <name type="scientific">Escherichia coli O8 (strain IAI1)</name>
    <dbReference type="NCBI Taxonomy" id="585034"/>
    <lineage>
        <taxon>Bacteria</taxon>
        <taxon>Pseudomonadati</taxon>
        <taxon>Pseudomonadota</taxon>
        <taxon>Gammaproteobacteria</taxon>
        <taxon>Enterobacterales</taxon>
        <taxon>Enterobacteriaceae</taxon>
        <taxon>Escherichia</taxon>
    </lineage>
</organism>
<feature type="chain" id="PRO_1000137685" description="Chaperone protein DnaJ">
    <location>
        <begin position="1"/>
        <end position="376"/>
    </location>
</feature>
<feature type="domain" description="J" evidence="1">
    <location>
        <begin position="5"/>
        <end position="70"/>
    </location>
</feature>
<feature type="repeat" description="CXXCXGXG motif">
    <location>
        <begin position="144"/>
        <end position="151"/>
    </location>
</feature>
<feature type="repeat" description="CXXCXGXG motif">
    <location>
        <begin position="161"/>
        <end position="168"/>
    </location>
</feature>
<feature type="repeat" description="CXXCXGXG motif">
    <location>
        <begin position="183"/>
        <end position="190"/>
    </location>
</feature>
<feature type="repeat" description="CXXCXGXG motif">
    <location>
        <begin position="197"/>
        <end position="204"/>
    </location>
</feature>
<feature type="zinc finger region" description="CR-type" evidence="1">
    <location>
        <begin position="131"/>
        <end position="209"/>
    </location>
</feature>
<feature type="binding site" evidence="1">
    <location>
        <position position="144"/>
    </location>
    <ligand>
        <name>Zn(2+)</name>
        <dbReference type="ChEBI" id="CHEBI:29105"/>
        <label>1</label>
    </ligand>
</feature>
<feature type="binding site" evidence="1">
    <location>
        <position position="147"/>
    </location>
    <ligand>
        <name>Zn(2+)</name>
        <dbReference type="ChEBI" id="CHEBI:29105"/>
        <label>1</label>
    </ligand>
</feature>
<feature type="binding site" evidence="1">
    <location>
        <position position="161"/>
    </location>
    <ligand>
        <name>Zn(2+)</name>
        <dbReference type="ChEBI" id="CHEBI:29105"/>
        <label>2</label>
    </ligand>
</feature>
<feature type="binding site" evidence="1">
    <location>
        <position position="164"/>
    </location>
    <ligand>
        <name>Zn(2+)</name>
        <dbReference type="ChEBI" id="CHEBI:29105"/>
        <label>2</label>
    </ligand>
</feature>
<feature type="binding site" evidence="1">
    <location>
        <position position="183"/>
    </location>
    <ligand>
        <name>Zn(2+)</name>
        <dbReference type="ChEBI" id="CHEBI:29105"/>
        <label>2</label>
    </ligand>
</feature>
<feature type="binding site" evidence="1">
    <location>
        <position position="186"/>
    </location>
    <ligand>
        <name>Zn(2+)</name>
        <dbReference type="ChEBI" id="CHEBI:29105"/>
        <label>2</label>
    </ligand>
</feature>
<feature type="binding site" evidence="1">
    <location>
        <position position="197"/>
    </location>
    <ligand>
        <name>Zn(2+)</name>
        <dbReference type="ChEBI" id="CHEBI:29105"/>
        <label>1</label>
    </ligand>
</feature>
<feature type="binding site" evidence="1">
    <location>
        <position position="200"/>
    </location>
    <ligand>
        <name>Zn(2+)</name>
        <dbReference type="ChEBI" id="CHEBI:29105"/>
        <label>1</label>
    </ligand>
</feature>
<reference key="1">
    <citation type="journal article" date="2009" name="PLoS Genet.">
        <title>Organised genome dynamics in the Escherichia coli species results in highly diverse adaptive paths.</title>
        <authorList>
            <person name="Touchon M."/>
            <person name="Hoede C."/>
            <person name="Tenaillon O."/>
            <person name="Barbe V."/>
            <person name="Baeriswyl S."/>
            <person name="Bidet P."/>
            <person name="Bingen E."/>
            <person name="Bonacorsi S."/>
            <person name="Bouchier C."/>
            <person name="Bouvet O."/>
            <person name="Calteau A."/>
            <person name="Chiapello H."/>
            <person name="Clermont O."/>
            <person name="Cruveiller S."/>
            <person name="Danchin A."/>
            <person name="Diard M."/>
            <person name="Dossat C."/>
            <person name="Karoui M.E."/>
            <person name="Frapy E."/>
            <person name="Garry L."/>
            <person name="Ghigo J.M."/>
            <person name="Gilles A.M."/>
            <person name="Johnson J."/>
            <person name="Le Bouguenec C."/>
            <person name="Lescat M."/>
            <person name="Mangenot S."/>
            <person name="Martinez-Jehanne V."/>
            <person name="Matic I."/>
            <person name="Nassif X."/>
            <person name="Oztas S."/>
            <person name="Petit M.A."/>
            <person name="Pichon C."/>
            <person name="Rouy Z."/>
            <person name="Ruf C.S."/>
            <person name="Schneider D."/>
            <person name="Tourret J."/>
            <person name="Vacherie B."/>
            <person name="Vallenet D."/>
            <person name="Medigue C."/>
            <person name="Rocha E.P.C."/>
            <person name="Denamur E."/>
        </authorList>
    </citation>
    <scope>NUCLEOTIDE SEQUENCE [LARGE SCALE GENOMIC DNA]</scope>
    <source>
        <strain>IAI1</strain>
    </source>
</reference>
<gene>
    <name evidence="1" type="primary">dnaJ</name>
    <name type="ordered locus">ECIAI1_0015</name>
</gene>
<keyword id="KW-0143">Chaperone</keyword>
<keyword id="KW-0963">Cytoplasm</keyword>
<keyword id="KW-0235">DNA replication</keyword>
<keyword id="KW-0479">Metal-binding</keyword>
<keyword id="KW-0677">Repeat</keyword>
<keyword id="KW-0346">Stress response</keyword>
<keyword id="KW-0862">Zinc</keyword>
<keyword id="KW-0863">Zinc-finger</keyword>